<protein>
    <recommendedName>
        <fullName evidence="1">Glutamate racemase</fullName>
        <ecNumber evidence="1">5.1.1.3</ecNumber>
    </recommendedName>
</protein>
<feature type="chain" id="PRO_0000095493" description="Glutamate racemase">
    <location>
        <begin position="1"/>
        <end position="270"/>
    </location>
</feature>
<feature type="active site" description="Proton donor/acceptor" evidence="1">
    <location>
        <position position="77"/>
    </location>
</feature>
<feature type="active site" description="Proton donor/acceptor" evidence="1">
    <location>
        <position position="189"/>
    </location>
</feature>
<feature type="binding site" evidence="1">
    <location>
        <begin position="14"/>
        <end position="15"/>
    </location>
    <ligand>
        <name>substrate</name>
    </ligand>
</feature>
<feature type="binding site" evidence="1">
    <location>
        <begin position="46"/>
        <end position="47"/>
    </location>
    <ligand>
        <name>substrate</name>
    </ligand>
</feature>
<feature type="binding site" evidence="1">
    <location>
        <begin position="78"/>
        <end position="79"/>
    </location>
    <ligand>
        <name>substrate</name>
    </ligand>
</feature>
<feature type="binding site" evidence="1">
    <location>
        <begin position="190"/>
        <end position="191"/>
    </location>
    <ligand>
        <name>substrate</name>
    </ligand>
</feature>
<reference key="1">
    <citation type="journal article" date="2000" name="Mol. Microbiol.">
        <title>Frequent interspecific genetic exchange between commensal Neisseriae and Neisseria meningitidis.</title>
        <authorList>
            <person name="Linz B."/>
            <person name="Schenker M."/>
            <person name="Zhu P."/>
            <person name="Achtman M."/>
        </authorList>
    </citation>
    <scope>NUCLEOTIDE SEQUENCE [GENOMIC DNA]</scope>
    <source>
        <strain>Z4400 / Serogroup C</strain>
    </source>
</reference>
<sequence>MENIGRQRPIGVFDSGIGGLTNVRALMERLPMENIIYFGDTARVPYGTKSKATIENFSMQIVDFLLEHDVKAMVIACNTIAAVAGQKIRQKTGNMPVLDVISAGAKAALATTRNNKIGIIATNTTVNSNAYARAIHRNNPDTLVRTQAAPLLVPLVEEGWLEHEVTRLTVCEYLKPLLADGIDTLVLGCTHFPLLKPLIGREAHNVALVDSAITTAEETARVLAQEGLLNTDNNNPDYRFYVSDIPLKFRTIGERFLGRTMEQIEMVSLG</sequence>
<organism>
    <name type="scientific">Neisseria meningitidis serogroup C</name>
    <dbReference type="NCBI Taxonomy" id="135720"/>
    <lineage>
        <taxon>Bacteria</taxon>
        <taxon>Pseudomonadati</taxon>
        <taxon>Pseudomonadota</taxon>
        <taxon>Betaproteobacteria</taxon>
        <taxon>Neisseriales</taxon>
        <taxon>Neisseriaceae</taxon>
        <taxon>Neisseria</taxon>
    </lineage>
</organism>
<dbReference type="EC" id="5.1.1.3" evidence="1"/>
<dbReference type="EMBL" id="AF194079">
    <property type="protein sequence ID" value="AAF08814.1"/>
    <property type="molecule type" value="Genomic_DNA"/>
</dbReference>
<dbReference type="SMR" id="Q9RMM3"/>
<dbReference type="OMA" id="WGDNSPP"/>
<dbReference type="UniPathway" id="UPA00219"/>
<dbReference type="GO" id="GO:0008881">
    <property type="term" value="F:glutamate racemase activity"/>
    <property type="evidence" value="ECO:0007669"/>
    <property type="project" value="UniProtKB-UniRule"/>
</dbReference>
<dbReference type="GO" id="GO:0071555">
    <property type="term" value="P:cell wall organization"/>
    <property type="evidence" value="ECO:0007669"/>
    <property type="project" value="UniProtKB-KW"/>
</dbReference>
<dbReference type="GO" id="GO:0009252">
    <property type="term" value="P:peptidoglycan biosynthetic process"/>
    <property type="evidence" value="ECO:0007669"/>
    <property type="project" value="UniProtKB-UniRule"/>
</dbReference>
<dbReference type="GO" id="GO:0008360">
    <property type="term" value="P:regulation of cell shape"/>
    <property type="evidence" value="ECO:0007669"/>
    <property type="project" value="UniProtKB-KW"/>
</dbReference>
<dbReference type="FunFam" id="3.40.50.1860:FF:000002">
    <property type="entry name" value="Glutamate racemase"/>
    <property type="match status" value="1"/>
</dbReference>
<dbReference type="Gene3D" id="3.40.50.1860">
    <property type="match status" value="2"/>
</dbReference>
<dbReference type="HAMAP" id="MF_00258">
    <property type="entry name" value="Glu_racemase"/>
    <property type="match status" value="1"/>
</dbReference>
<dbReference type="InterPro" id="IPR015942">
    <property type="entry name" value="Asp/Glu/hydantoin_racemase"/>
</dbReference>
<dbReference type="InterPro" id="IPR001920">
    <property type="entry name" value="Asp/Glu_race"/>
</dbReference>
<dbReference type="InterPro" id="IPR033134">
    <property type="entry name" value="Asp/Glu_racemase_AS_2"/>
</dbReference>
<dbReference type="InterPro" id="IPR004391">
    <property type="entry name" value="Glu_race"/>
</dbReference>
<dbReference type="NCBIfam" id="TIGR00067">
    <property type="entry name" value="glut_race"/>
    <property type="match status" value="1"/>
</dbReference>
<dbReference type="PANTHER" id="PTHR21198">
    <property type="entry name" value="GLUTAMATE RACEMASE"/>
    <property type="match status" value="1"/>
</dbReference>
<dbReference type="PANTHER" id="PTHR21198:SF2">
    <property type="entry name" value="GLUTAMATE RACEMASE"/>
    <property type="match status" value="1"/>
</dbReference>
<dbReference type="Pfam" id="PF01177">
    <property type="entry name" value="Asp_Glu_race"/>
    <property type="match status" value="1"/>
</dbReference>
<dbReference type="SUPFAM" id="SSF53681">
    <property type="entry name" value="Aspartate/glutamate racemase"/>
    <property type="match status" value="2"/>
</dbReference>
<dbReference type="PROSITE" id="PS00924">
    <property type="entry name" value="ASP_GLU_RACEMASE_2"/>
    <property type="match status" value="1"/>
</dbReference>
<comment type="function">
    <text evidence="1">Provides the (R)-glutamate required for cell wall biosynthesis.</text>
</comment>
<comment type="catalytic activity">
    <reaction evidence="1">
        <text>L-glutamate = D-glutamate</text>
        <dbReference type="Rhea" id="RHEA:12813"/>
        <dbReference type="ChEBI" id="CHEBI:29985"/>
        <dbReference type="ChEBI" id="CHEBI:29986"/>
        <dbReference type="EC" id="5.1.1.3"/>
    </reaction>
</comment>
<comment type="pathway">
    <text evidence="1">Cell wall biogenesis; peptidoglycan biosynthesis.</text>
</comment>
<comment type="similarity">
    <text evidence="1">Belongs to the aspartate/glutamate racemases family.</text>
</comment>
<accession>Q9RMM3</accession>
<proteinExistence type="inferred from homology"/>
<name>MURI_NEIMC</name>
<gene>
    <name evidence="1" type="primary">murI</name>
</gene>
<keyword id="KW-0133">Cell shape</keyword>
<keyword id="KW-0961">Cell wall biogenesis/degradation</keyword>
<keyword id="KW-0413">Isomerase</keyword>
<keyword id="KW-0573">Peptidoglycan synthesis</keyword>
<evidence type="ECO:0000255" key="1">
    <source>
        <dbReference type="HAMAP-Rule" id="MF_00258"/>
    </source>
</evidence>